<name>PGK_EXISA</name>
<feature type="chain" id="PRO_1000203334" description="Phosphoglycerate kinase">
    <location>
        <begin position="1"/>
        <end position="394"/>
    </location>
</feature>
<feature type="binding site" evidence="1">
    <location>
        <begin position="21"/>
        <end position="23"/>
    </location>
    <ligand>
        <name>substrate</name>
    </ligand>
</feature>
<feature type="binding site" evidence="1">
    <location>
        <position position="36"/>
    </location>
    <ligand>
        <name>substrate</name>
    </ligand>
</feature>
<feature type="binding site" evidence="1">
    <location>
        <begin position="59"/>
        <end position="62"/>
    </location>
    <ligand>
        <name>substrate</name>
    </ligand>
</feature>
<feature type="binding site" evidence="1">
    <location>
        <position position="118"/>
    </location>
    <ligand>
        <name>substrate</name>
    </ligand>
</feature>
<feature type="binding site" evidence="1">
    <location>
        <position position="151"/>
    </location>
    <ligand>
        <name>substrate</name>
    </ligand>
</feature>
<feature type="binding site" evidence="1">
    <location>
        <position position="202"/>
    </location>
    <ligand>
        <name>ATP</name>
        <dbReference type="ChEBI" id="CHEBI:30616"/>
    </ligand>
</feature>
<feature type="binding site" evidence="1">
    <location>
        <position position="293"/>
    </location>
    <ligand>
        <name>ATP</name>
        <dbReference type="ChEBI" id="CHEBI:30616"/>
    </ligand>
</feature>
<feature type="binding site" evidence="1">
    <location>
        <position position="324"/>
    </location>
    <ligand>
        <name>ATP</name>
        <dbReference type="ChEBI" id="CHEBI:30616"/>
    </ligand>
</feature>
<feature type="binding site" evidence="1">
    <location>
        <begin position="350"/>
        <end position="353"/>
    </location>
    <ligand>
        <name>ATP</name>
        <dbReference type="ChEBI" id="CHEBI:30616"/>
    </ligand>
</feature>
<accession>C4L5H7</accession>
<sequence length="394" mass="41898">MNKQSIRDIDVKGKRVFCRVDFNVPLKDGVIQDETRIQAALPTIKHLLDGGAKLVLASHLGRPKGEKKPEFSLAPVAKRLAELLGKDVPLVEEAYGPVAEEAVANLSEGDVVVLENVRFYPGETKNDPELAKGFAALADVYVNDAFGAAHRAHASTEGIAHHVDTAVAGLLMEKELEVLGKALSNPDRPFTAIIGGSKVADKIGVIDHLLDIVDTLIIGGGLSYTFSKALGHEVGTSLLEEDKLDLARQFMKKAEDKGVKFLMPVDCVITKEFGEETYVGPVDIDSIPADHMGLDIGPKTVELYADAIRESKLVVWNGPMGVFELDKYANGTKGVAQALADSDAYSIIGGGDSAAAAAKFGLADKMSHISTGGGASLEFMEGKKLPGVEALNDK</sequence>
<reference key="1">
    <citation type="journal article" date="2011" name="J. Bacteriol.">
        <title>Complete genome sequence of the Thermophilic Bacterium Exiguobacterium sp. AT1b.</title>
        <authorList>
            <person name="Vishnivetskaya T.A."/>
            <person name="Lucas S."/>
            <person name="Copeland A."/>
            <person name="Lapidus A."/>
            <person name="Glavina del Rio T."/>
            <person name="Dalin E."/>
            <person name="Tice H."/>
            <person name="Bruce D.C."/>
            <person name="Goodwin L.A."/>
            <person name="Pitluck S."/>
            <person name="Saunders E."/>
            <person name="Brettin T."/>
            <person name="Detter C."/>
            <person name="Han C."/>
            <person name="Larimer F."/>
            <person name="Land M.L."/>
            <person name="Hauser L.J."/>
            <person name="Kyrpides N.C."/>
            <person name="Ovchinnikova G."/>
            <person name="Kathariou S."/>
            <person name="Ramaley R.F."/>
            <person name="Rodrigues D.F."/>
            <person name="Hendrix C."/>
            <person name="Richardson P."/>
            <person name="Tiedje J.M."/>
        </authorList>
    </citation>
    <scope>NUCLEOTIDE SEQUENCE [LARGE SCALE GENOMIC DNA]</scope>
    <source>
        <strain>ATCC BAA-1283 / AT1b</strain>
    </source>
</reference>
<comment type="catalytic activity">
    <reaction evidence="1">
        <text>(2R)-3-phosphoglycerate + ATP = (2R)-3-phospho-glyceroyl phosphate + ADP</text>
        <dbReference type="Rhea" id="RHEA:14801"/>
        <dbReference type="ChEBI" id="CHEBI:30616"/>
        <dbReference type="ChEBI" id="CHEBI:57604"/>
        <dbReference type="ChEBI" id="CHEBI:58272"/>
        <dbReference type="ChEBI" id="CHEBI:456216"/>
        <dbReference type="EC" id="2.7.2.3"/>
    </reaction>
</comment>
<comment type="pathway">
    <text evidence="1">Carbohydrate degradation; glycolysis; pyruvate from D-glyceraldehyde 3-phosphate: step 2/5.</text>
</comment>
<comment type="subunit">
    <text evidence="1">Monomer.</text>
</comment>
<comment type="subcellular location">
    <subcellularLocation>
        <location evidence="1">Cytoplasm</location>
    </subcellularLocation>
</comment>
<comment type="similarity">
    <text evidence="1">Belongs to the phosphoglycerate kinase family.</text>
</comment>
<proteinExistence type="inferred from homology"/>
<gene>
    <name evidence="1" type="primary">pgk</name>
    <name type="ordered locus">EAT1b_0863</name>
</gene>
<dbReference type="EC" id="2.7.2.3" evidence="1"/>
<dbReference type="EMBL" id="CP001615">
    <property type="protein sequence ID" value="ACQ69792.1"/>
    <property type="molecule type" value="Genomic_DNA"/>
</dbReference>
<dbReference type="RefSeq" id="WP_012726911.1">
    <property type="nucleotide sequence ID" value="NC_012673.1"/>
</dbReference>
<dbReference type="SMR" id="C4L5H7"/>
<dbReference type="STRING" id="360911.EAT1b_0863"/>
<dbReference type="KEGG" id="eat:EAT1b_0863"/>
<dbReference type="eggNOG" id="COG0126">
    <property type="taxonomic scope" value="Bacteria"/>
</dbReference>
<dbReference type="HOGENOM" id="CLU_025427_0_2_9"/>
<dbReference type="OrthoDB" id="9808460at2"/>
<dbReference type="UniPathway" id="UPA00109">
    <property type="reaction ID" value="UER00185"/>
</dbReference>
<dbReference type="Proteomes" id="UP000000716">
    <property type="component" value="Chromosome"/>
</dbReference>
<dbReference type="GO" id="GO:0005829">
    <property type="term" value="C:cytosol"/>
    <property type="evidence" value="ECO:0007669"/>
    <property type="project" value="TreeGrafter"/>
</dbReference>
<dbReference type="GO" id="GO:0043531">
    <property type="term" value="F:ADP binding"/>
    <property type="evidence" value="ECO:0007669"/>
    <property type="project" value="TreeGrafter"/>
</dbReference>
<dbReference type="GO" id="GO:0005524">
    <property type="term" value="F:ATP binding"/>
    <property type="evidence" value="ECO:0007669"/>
    <property type="project" value="UniProtKB-KW"/>
</dbReference>
<dbReference type="GO" id="GO:0004618">
    <property type="term" value="F:phosphoglycerate kinase activity"/>
    <property type="evidence" value="ECO:0007669"/>
    <property type="project" value="UniProtKB-UniRule"/>
</dbReference>
<dbReference type="GO" id="GO:0006094">
    <property type="term" value="P:gluconeogenesis"/>
    <property type="evidence" value="ECO:0007669"/>
    <property type="project" value="TreeGrafter"/>
</dbReference>
<dbReference type="GO" id="GO:0006096">
    <property type="term" value="P:glycolytic process"/>
    <property type="evidence" value="ECO:0007669"/>
    <property type="project" value="UniProtKB-UniRule"/>
</dbReference>
<dbReference type="CDD" id="cd00318">
    <property type="entry name" value="Phosphoglycerate_kinase"/>
    <property type="match status" value="1"/>
</dbReference>
<dbReference type="FunFam" id="3.40.50.1260:FF:000001">
    <property type="entry name" value="Phosphoglycerate kinase"/>
    <property type="match status" value="1"/>
</dbReference>
<dbReference type="FunFam" id="3.40.50.1260:FF:000002">
    <property type="entry name" value="Phosphoglycerate kinase"/>
    <property type="match status" value="1"/>
</dbReference>
<dbReference type="Gene3D" id="3.40.50.1260">
    <property type="entry name" value="Phosphoglycerate kinase, N-terminal domain"/>
    <property type="match status" value="2"/>
</dbReference>
<dbReference type="HAMAP" id="MF_00145">
    <property type="entry name" value="Phosphoglyc_kinase"/>
    <property type="match status" value="1"/>
</dbReference>
<dbReference type="InterPro" id="IPR001576">
    <property type="entry name" value="Phosphoglycerate_kinase"/>
</dbReference>
<dbReference type="InterPro" id="IPR015911">
    <property type="entry name" value="Phosphoglycerate_kinase_CS"/>
</dbReference>
<dbReference type="InterPro" id="IPR015824">
    <property type="entry name" value="Phosphoglycerate_kinase_N"/>
</dbReference>
<dbReference type="InterPro" id="IPR036043">
    <property type="entry name" value="Phosphoglycerate_kinase_sf"/>
</dbReference>
<dbReference type="PANTHER" id="PTHR11406">
    <property type="entry name" value="PHOSPHOGLYCERATE KINASE"/>
    <property type="match status" value="1"/>
</dbReference>
<dbReference type="PANTHER" id="PTHR11406:SF23">
    <property type="entry name" value="PHOSPHOGLYCERATE KINASE 1, CHLOROPLASTIC-RELATED"/>
    <property type="match status" value="1"/>
</dbReference>
<dbReference type="Pfam" id="PF00162">
    <property type="entry name" value="PGK"/>
    <property type="match status" value="1"/>
</dbReference>
<dbReference type="PIRSF" id="PIRSF000724">
    <property type="entry name" value="Pgk"/>
    <property type="match status" value="1"/>
</dbReference>
<dbReference type="PRINTS" id="PR00477">
    <property type="entry name" value="PHGLYCKINASE"/>
</dbReference>
<dbReference type="SUPFAM" id="SSF53748">
    <property type="entry name" value="Phosphoglycerate kinase"/>
    <property type="match status" value="1"/>
</dbReference>
<dbReference type="PROSITE" id="PS00111">
    <property type="entry name" value="PGLYCERATE_KINASE"/>
    <property type="match status" value="1"/>
</dbReference>
<protein>
    <recommendedName>
        <fullName evidence="1">Phosphoglycerate kinase</fullName>
        <ecNumber evidence="1">2.7.2.3</ecNumber>
    </recommendedName>
</protein>
<evidence type="ECO:0000255" key="1">
    <source>
        <dbReference type="HAMAP-Rule" id="MF_00145"/>
    </source>
</evidence>
<organism>
    <name type="scientific">Exiguobacterium sp. (strain ATCC BAA-1283 / AT1b)</name>
    <dbReference type="NCBI Taxonomy" id="360911"/>
    <lineage>
        <taxon>Bacteria</taxon>
        <taxon>Bacillati</taxon>
        <taxon>Bacillota</taxon>
        <taxon>Bacilli</taxon>
        <taxon>Bacillales</taxon>
        <taxon>Bacillales Family XII. Incertae Sedis</taxon>
        <taxon>Exiguobacterium</taxon>
    </lineage>
</organism>
<keyword id="KW-0067">ATP-binding</keyword>
<keyword id="KW-0963">Cytoplasm</keyword>
<keyword id="KW-0324">Glycolysis</keyword>
<keyword id="KW-0418">Kinase</keyword>
<keyword id="KW-0547">Nucleotide-binding</keyword>
<keyword id="KW-0808">Transferase</keyword>